<keyword id="KW-0963">Cytoplasm</keyword>
<keyword id="KW-0342">GTP-binding</keyword>
<keyword id="KW-0378">Hydrolase</keyword>
<keyword id="KW-0547">Nucleotide-binding</keyword>
<keyword id="KW-1185">Reference proteome</keyword>
<keyword id="KW-0687">Ribonucleoprotein</keyword>
<keyword id="KW-0694">RNA-binding</keyword>
<keyword id="KW-0733">Signal recognition particle</keyword>
<dbReference type="EC" id="3.6.5.4" evidence="1"/>
<dbReference type="EMBL" id="AE000657">
    <property type="protein sequence ID" value="AAC07579.1"/>
    <property type="molecule type" value="Genomic_DNA"/>
</dbReference>
<dbReference type="PIR" id="E70448">
    <property type="entry name" value="E70448"/>
</dbReference>
<dbReference type="RefSeq" id="NP_214181.1">
    <property type="nucleotide sequence ID" value="NC_000918.1"/>
</dbReference>
<dbReference type="RefSeq" id="WP_010881118.1">
    <property type="nucleotide sequence ID" value="NC_000918.1"/>
</dbReference>
<dbReference type="SMR" id="O67615"/>
<dbReference type="FunCoup" id="O67615">
    <property type="interactions" value="444"/>
</dbReference>
<dbReference type="STRING" id="224324.aq_1720"/>
<dbReference type="EnsemblBacteria" id="AAC07579">
    <property type="protein sequence ID" value="AAC07579"/>
    <property type="gene ID" value="aq_1720"/>
</dbReference>
<dbReference type="KEGG" id="aae:aq_1720"/>
<dbReference type="PATRIC" id="fig|224324.8.peg.1323"/>
<dbReference type="eggNOG" id="COG0541">
    <property type="taxonomic scope" value="Bacteria"/>
</dbReference>
<dbReference type="HOGENOM" id="CLU_009301_6_0_0"/>
<dbReference type="InParanoid" id="O67615"/>
<dbReference type="OrthoDB" id="9804720at2"/>
<dbReference type="Proteomes" id="UP000000798">
    <property type="component" value="Chromosome"/>
</dbReference>
<dbReference type="GO" id="GO:0048500">
    <property type="term" value="C:signal recognition particle"/>
    <property type="evidence" value="ECO:0007669"/>
    <property type="project" value="UniProtKB-UniRule"/>
</dbReference>
<dbReference type="GO" id="GO:0008312">
    <property type="term" value="F:7S RNA binding"/>
    <property type="evidence" value="ECO:0007669"/>
    <property type="project" value="InterPro"/>
</dbReference>
<dbReference type="GO" id="GO:0016887">
    <property type="term" value="F:ATP hydrolysis activity"/>
    <property type="evidence" value="ECO:0007669"/>
    <property type="project" value="InterPro"/>
</dbReference>
<dbReference type="GO" id="GO:0005525">
    <property type="term" value="F:GTP binding"/>
    <property type="evidence" value="ECO:0007669"/>
    <property type="project" value="UniProtKB-UniRule"/>
</dbReference>
<dbReference type="GO" id="GO:0003924">
    <property type="term" value="F:GTPase activity"/>
    <property type="evidence" value="ECO:0007669"/>
    <property type="project" value="UniProtKB-UniRule"/>
</dbReference>
<dbReference type="GO" id="GO:0006614">
    <property type="term" value="P:SRP-dependent cotranslational protein targeting to membrane"/>
    <property type="evidence" value="ECO:0007669"/>
    <property type="project" value="InterPro"/>
</dbReference>
<dbReference type="CDD" id="cd18539">
    <property type="entry name" value="SRP_G"/>
    <property type="match status" value="1"/>
</dbReference>
<dbReference type="Gene3D" id="3.40.50.300">
    <property type="entry name" value="P-loop containing nucleotide triphosphate hydrolases"/>
    <property type="match status" value="1"/>
</dbReference>
<dbReference type="Gene3D" id="1.20.120.140">
    <property type="entry name" value="Signal recognition particle SRP54, nucleotide-binding domain"/>
    <property type="match status" value="1"/>
</dbReference>
<dbReference type="Gene3D" id="1.10.260.30">
    <property type="entry name" value="Signal recognition particle, SRP54 subunit, M-domain"/>
    <property type="match status" value="1"/>
</dbReference>
<dbReference type="HAMAP" id="MF_00306">
    <property type="entry name" value="SRP54"/>
    <property type="match status" value="1"/>
</dbReference>
<dbReference type="InterPro" id="IPR003593">
    <property type="entry name" value="AAA+_ATPase"/>
</dbReference>
<dbReference type="InterPro" id="IPR027417">
    <property type="entry name" value="P-loop_NTPase"/>
</dbReference>
<dbReference type="InterPro" id="IPR036891">
    <property type="entry name" value="Signal_recog_part_SRP54_M_sf"/>
</dbReference>
<dbReference type="InterPro" id="IPR013822">
    <property type="entry name" value="Signal_recog_particl_SRP54_hlx"/>
</dbReference>
<dbReference type="InterPro" id="IPR004125">
    <property type="entry name" value="Signal_recog_particle_SRP54_M"/>
</dbReference>
<dbReference type="InterPro" id="IPR004780">
    <property type="entry name" value="SRP"/>
</dbReference>
<dbReference type="InterPro" id="IPR022941">
    <property type="entry name" value="SRP54"/>
</dbReference>
<dbReference type="InterPro" id="IPR000897">
    <property type="entry name" value="SRP54_GTPase_dom"/>
</dbReference>
<dbReference type="InterPro" id="IPR042101">
    <property type="entry name" value="SRP54_N_sf"/>
</dbReference>
<dbReference type="NCBIfam" id="TIGR00959">
    <property type="entry name" value="ffh"/>
    <property type="match status" value="1"/>
</dbReference>
<dbReference type="PANTHER" id="PTHR11564">
    <property type="entry name" value="SIGNAL RECOGNITION PARTICLE 54K PROTEIN SRP54"/>
    <property type="match status" value="1"/>
</dbReference>
<dbReference type="PANTHER" id="PTHR11564:SF5">
    <property type="entry name" value="SIGNAL RECOGNITION PARTICLE SUBUNIT SRP54"/>
    <property type="match status" value="1"/>
</dbReference>
<dbReference type="Pfam" id="PF00448">
    <property type="entry name" value="SRP54"/>
    <property type="match status" value="1"/>
</dbReference>
<dbReference type="Pfam" id="PF02881">
    <property type="entry name" value="SRP54_N"/>
    <property type="match status" value="1"/>
</dbReference>
<dbReference type="Pfam" id="PF02978">
    <property type="entry name" value="SRP_SPB"/>
    <property type="match status" value="1"/>
</dbReference>
<dbReference type="SMART" id="SM00382">
    <property type="entry name" value="AAA"/>
    <property type="match status" value="1"/>
</dbReference>
<dbReference type="SMART" id="SM00962">
    <property type="entry name" value="SRP54"/>
    <property type="match status" value="1"/>
</dbReference>
<dbReference type="SMART" id="SM00963">
    <property type="entry name" value="SRP54_N"/>
    <property type="match status" value="1"/>
</dbReference>
<dbReference type="SUPFAM" id="SSF52540">
    <property type="entry name" value="P-loop containing nucleoside triphosphate hydrolases"/>
    <property type="match status" value="1"/>
</dbReference>
<dbReference type="SUPFAM" id="SSF47446">
    <property type="entry name" value="Signal peptide-binding domain"/>
    <property type="match status" value="1"/>
</dbReference>
<dbReference type="PROSITE" id="PS00300">
    <property type="entry name" value="SRP54"/>
    <property type="match status" value="1"/>
</dbReference>
<name>SRP54_AQUAE</name>
<accession>O67615</accession>
<gene>
    <name evidence="1" type="primary">ffh</name>
    <name type="ordered locus">aq_1720</name>
</gene>
<sequence length="454" mass="50912">MLELLTEKFSHALEKLTNARKITEKNINQTLREIRLALLEADVDYQVAKDFIKRIREKVVGKEVPKNLSPAEFVIKTVYEELVDILGGEKADLKKGTVLFVGLQGTGKTTTIGKIANLLKKGGHKVAVSSTDLRRPAAMLQLQRLAERVGVPYYEFEEGLGAVEIARRAVKRAKEESVDYLLLDTAGRLHVDEELMKELQEIKEVTNPSEILYVADAMQGQTALETAKTFHERLGLTGVVITKMDGDARGGLALSVKEVLGVPIKFIGVGEKIEDIEPFYPDRIAQRILGLGDIQSLVEKAQEVITEDKAQVMATKVMTGEFDLEDLREMLRMIQQMGPLDKLLSMIPGVAPQLKHLKVDEKQFKKIEAIINSMTPEERRNPKIINMSRKKRIARGSGTTVSDVNKLLKRYEEMKKMMRKLQKAGGMPAIPKMPKMPRFPSEASSFNLFLFLST</sequence>
<proteinExistence type="inferred from homology"/>
<evidence type="ECO:0000255" key="1">
    <source>
        <dbReference type="HAMAP-Rule" id="MF_00306"/>
    </source>
</evidence>
<reference key="1">
    <citation type="journal article" date="1998" name="Nature">
        <title>The complete genome of the hyperthermophilic bacterium Aquifex aeolicus.</title>
        <authorList>
            <person name="Deckert G."/>
            <person name="Warren P.V."/>
            <person name="Gaasterland T."/>
            <person name="Young W.G."/>
            <person name="Lenox A.L."/>
            <person name="Graham D.E."/>
            <person name="Overbeek R."/>
            <person name="Snead M.A."/>
            <person name="Keller M."/>
            <person name="Aujay M."/>
            <person name="Huber R."/>
            <person name="Feldman R.A."/>
            <person name="Short J.M."/>
            <person name="Olsen G.J."/>
            <person name="Swanson R.V."/>
        </authorList>
    </citation>
    <scope>NUCLEOTIDE SEQUENCE [LARGE SCALE GENOMIC DNA]</scope>
    <source>
        <strain>VF5</strain>
    </source>
</reference>
<feature type="chain" id="PRO_0000101148" description="Signal recognition particle protein">
    <location>
        <begin position="1"/>
        <end position="454"/>
    </location>
</feature>
<feature type="binding site" evidence="1">
    <location>
        <begin position="102"/>
        <end position="109"/>
    </location>
    <ligand>
        <name>GTP</name>
        <dbReference type="ChEBI" id="CHEBI:37565"/>
    </ligand>
</feature>
<feature type="binding site" evidence="1">
    <location>
        <begin position="184"/>
        <end position="188"/>
    </location>
    <ligand>
        <name>GTP</name>
        <dbReference type="ChEBI" id="CHEBI:37565"/>
    </ligand>
</feature>
<feature type="binding site" evidence="1">
    <location>
        <begin position="242"/>
        <end position="245"/>
    </location>
    <ligand>
        <name>GTP</name>
        <dbReference type="ChEBI" id="CHEBI:37565"/>
    </ligand>
</feature>
<organism>
    <name type="scientific">Aquifex aeolicus (strain VF5)</name>
    <dbReference type="NCBI Taxonomy" id="224324"/>
    <lineage>
        <taxon>Bacteria</taxon>
        <taxon>Pseudomonadati</taxon>
        <taxon>Aquificota</taxon>
        <taxon>Aquificia</taxon>
        <taxon>Aquificales</taxon>
        <taxon>Aquificaceae</taxon>
        <taxon>Aquifex</taxon>
    </lineage>
</organism>
<comment type="function">
    <text evidence="1">Involved in targeting and insertion of nascent membrane proteins into the cytoplasmic membrane. Binds to the hydrophobic signal sequence of the ribosome-nascent chain (RNC) as it emerges from the ribosomes. The SRP-RNC complex is then targeted to the cytoplasmic membrane where it interacts with the SRP receptor FtsY.</text>
</comment>
<comment type="catalytic activity">
    <reaction evidence="1">
        <text>GTP + H2O = GDP + phosphate + H(+)</text>
        <dbReference type="Rhea" id="RHEA:19669"/>
        <dbReference type="ChEBI" id="CHEBI:15377"/>
        <dbReference type="ChEBI" id="CHEBI:15378"/>
        <dbReference type="ChEBI" id="CHEBI:37565"/>
        <dbReference type="ChEBI" id="CHEBI:43474"/>
        <dbReference type="ChEBI" id="CHEBI:58189"/>
        <dbReference type="EC" id="3.6.5.4"/>
    </reaction>
</comment>
<comment type="subunit">
    <text evidence="1">Part of the signal recognition particle protein translocation system, which is composed of SRP and FtsY.</text>
</comment>
<comment type="subcellular location">
    <subcellularLocation>
        <location evidence="1">Cytoplasm</location>
    </subcellularLocation>
    <text evidence="1">The SRP-RNC complex is targeted to the cytoplasmic membrane.</text>
</comment>
<comment type="domain">
    <text evidence="1">Composed of three domains: the N-terminal N domain, which is responsible for interactions with the ribosome, the central G domain, which binds GTP, and the C-terminal M domain, which binds the RNA and the signal sequence of the RNC.</text>
</comment>
<comment type="similarity">
    <text evidence="1">Belongs to the GTP-binding SRP family. SRP54 subfamily.</text>
</comment>
<protein>
    <recommendedName>
        <fullName evidence="1">Signal recognition particle protein</fullName>
        <ecNumber evidence="1">3.6.5.4</ecNumber>
    </recommendedName>
    <alternativeName>
        <fullName evidence="1">Fifty-four homolog</fullName>
    </alternativeName>
</protein>